<reference key="1">
    <citation type="journal article" date="2001" name="Science">
        <title>Comparative genomics of Listeria species.</title>
        <authorList>
            <person name="Glaser P."/>
            <person name="Frangeul L."/>
            <person name="Buchrieser C."/>
            <person name="Rusniok C."/>
            <person name="Amend A."/>
            <person name="Baquero F."/>
            <person name="Berche P."/>
            <person name="Bloecker H."/>
            <person name="Brandt P."/>
            <person name="Chakraborty T."/>
            <person name="Charbit A."/>
            <person name="Chetouani F."/>
            <person name="Couve E."/>
            <person name="de Daruvar A."/>
            <person name="Dehoux P."/>
            <person name="Domann E."/>
            <person name="Dominguez-Bernal G."/>
            <person name="Duchaud E."/>
            <person name="Durant L."/>
            <person name="Dussurget O."/>
            <person name="Entian K.-D."/>
            <person name="Fsihi H."/>
            <person name="Garcia-del Portillo F."/>
            <person name="Garrido P."/>
            <person name="Gautier L."/>
            <person name="Goebel W."/>
            <person name="Gomez-Lopez N."/>
            <person name="Hain T."/>
            <person name="Hauf J."/>
            <person name="Jackson D."/>
            <person name="Jones L.-M."/>
            <person name="Kaerst U."/>
            <person name="Kreft J."/>
            <person name="Kuhn M."/>
            <person name="Kunst F."/>
            <person name="Kurapkat G."/>
            <person name="Madueno E."/>
            <person name="Maitournam A."/>
            <person name="Mata Vicente J."/>
            <person name="Ng E."/>
            <person name="Nedjari H."/>
            <person name="Nordsiek G."/>
            <person name="Novella S."/>
            <person name="de Pablos B."/>
            <person name="Perez-Diaz J.-C."/>
            <person name="Purcell R."/>
            <person name="Remmel B."/>
            <person name="Rose M."/>
            <person name="Schlueter T."/>
            <person name="Simoes N."/>
            <person name="Tierrez A."/>
            <person name="Vazquez-Boland J.-A."/>
            <person name="Voss H."/>
            <person name="Wehland J."/>
            <person name="Cossart P."/>
        </authorList>
    </citation>
    <scope>NUCLEOTIDE SEQUENCE [LARGE SCALE GENOMIC DNA]</scope>
    <source>
        <strain>ATCC BAA-680 / CLIP 11262</strain>
    </source>
</reference>
<proteinExistence type="inferred from homology"/>
<protein>
    <recommendedName>
        <fullName evidence="1">Aspartyl/glutamyl-tRNA(Asn/Gln) amidotransferase subunit B</fullName>
        <shortName evidence="1">Asp/Glu-ADT subunit B</shortName>
        <ecNumber evidence="1">6.3.5.-</ecNumber>
    </recommendedName>
</protein>
<evidence type="ECO:0000255" key="1">
    <source>
        <dbReference type="HAMAP-Rule" id="MF_00121"/>
    </source>
</evidence>
<gene>
    <name evidence="1" type="primary">gatB</name>
    <name type="ordered locus">lin1866</name>
</gene>
<comment type="function">
    <text evidence="1">Allows the formation of correctly charged Asn-tRNA(Asn) or Gln-tRNA(Gln) through the transamidation of misacylated Asp-tRNA(Asn) or Glu-tRNA(Gln) in organisms which lack either or both of asparaginyl-tRNA or glutaminyl-tRNA synthetases. The reaction takes place in the presence of glutamine and ATP through an activated phospho-Asp-tRNA(Asn) or phospho-Glu-tRNA(Gln).</text>
</comment>
<comment type="catalytic activity">
    <reaction evidence="1">
        <text>L-glutamyl-tRNA(Gln) + L-glutamine + ATP + H2O = L-glutaminyl-tRNA(Gln) + L-glutamate + ADP + phosphate + H(+)</text>
        <dbReference type="Rhea" id="RHEA:17521"/>
        <dbReference type="Rhea" id="RHEA-COMP:9681"/>
        <dbReference type="Rhea" id="RHEA-COMP:9684"/>
        <dbReference type="ChEBI" id="CHEBI:15377"/>
        <dbReference type="ChEBI" id="CHEBI:15378"/>
        <dbReference type="ChEBI" id="CHEBI:29985"/>
        <dbReference type="ChEBI" id="CHEBI:30616"/>
        <dbReference type="ChEBI" id="CHEBI:43474"/>
        <dbReference type="ChEBI" id="CHEBI:58359"/>
        <dbReference type="ChEBI" id="CHEBI:78520"/>
        <dbReference type="ChEBI" id="CHEBI:78521"/>
        <dbReference type="ChEBI" id="CHEBI:456216"/>
    </reaction>
</comment>
<comment type="catalytic activity">
    <reaction evidence="1">
        <text>L-aspartyl-tRNA(Asn) + L-glutamine + ATP + H2O = L-asparaginyl-tRNA(Asn) + L-glutamate + ADP + phosphate + 2 H(+)</text>
        <dbReference type="Rhea" id="RHEA:14513"/>
        <dbReference type="Rhea" id="RHEA-COMP:9674"/>
        <dbReference type="Rhea" id="RHEA-COMP:9677"/>
        <dbReference type="ChEBI" id="CHEBI:15377"/>
        <dbReference type="ChEBI" id="CHEBI:15378"/>
        <dbReference type="ChEBI" id="CHEBI:29985"/>
        <dbReference type="ChEBI" id="CHEBI:30616"/>
        <dbReference type="ChEBI" id="CHEBI:43474"/>
        <dbReference type="ChEBI" id="CHEBI:58359"/>
        <dbReference type="ChEBI" id="CHEBI:78515"/>
        <dbReference type="ChEBI" id="CHEBI:78516"/>
        <dbReference type="ChEBI" id="CHEBI:456216"/>
    </reaction>
</comment>
<comment type="subunit">
    <text evidence="1">Heterotrimer of A, B and C subunits.</text>
</comment>
<comment type="similarity">
    <text evidence="1">Belongs to the GatB/GatE family. GatB subfamily.</text>
</comment>
<organism>
    <name type="scientific">Listeria innocua serovar 6a (strain ATCC BAA-680 / CLIP 11262)</name>
    <dbReference type="NCBI Taxonomy" id="272626"/>
    <lineage>
        <taxon>Bacteria</taxon>
        <taxon>Bacillati</taxon>
        <taxon>Bacillota</taxon>
        <taxon>Bacilli</taxon>
        <taxon>Bacillales</taxon>
        <taxon>Listeriaceae</taxon>
        <taxon>Listeria</taxon>
    </lineage>
</organism>
<keyword id="KW-0067">ATP-binding</keyword>
<keyword id="KW-0436">Ligase</keyword>
<keyword id="KW-0547">Nucleotide-binding</keyword>
<keyword id="KW-0648">Protein biosynthesis</keyword>
<feature type="chain" id="PRO_0000148802" description="Aspartyl/glutamyl-tRNA(Asn/Gln) amidotransferase subunit B">
    <location>
        <begin position="1"/>
        <end position="476"/>
    </location>
</feature>
<sequence length="476" mass="53210">MNFETVIGLEVHVELKTNSKIFSSAPAHFGAEPNTNTTVVDLGMPGVLPVLNKRAVEYGMKAAMAINCEIAEHTKFDRKNYFYPDNPKAYQISQFDKPIGEHGWIEIEVGGKKKKIGITRLHLEEDAGKNTHTSHGYSLVDINRQGTPLIEIVSEPDIRSAEEAYAYLEKLKSIIQYTGVSDVKMEEGSMRCDANISIRPIGQEEFGVKTELKNLNSFNNVRKGIEYEEKRQAEVLKSGGIIEQETRRFEEATGKTSLMRIKEGSDDYRYFPEPDLVDLFIDDAWKERIRAEIPELPDKRQIRYINDLGLPAYDAMVLTLTKEMSDFFEATLAAGADAKQASNWLMGEVSAYLNAEQKELHDTGLTPENLAGMIKLIEAGTISSKIAKKVFRELAQNGGDAEQVVKDKGLVQISDEGALRTIIGEILDNNEQSIIDYKNGKDRAVGFLVGQVMKATKGQANPPMVNKILLEEMNKR</sequence>
<name>GATB_LISIN</name>
<accession>Q92AQ4</accession>
<dbReference type="EC" id="6.3.5.-" evidence="1"/>
<dbReference type="EMBL" id="AL596170">
    <property type="protein sequence ID" value="CAC97096.1"/>
    <property type="molecule type" value="Genomic_DNA"/>
</dbReference>
<dbReference type="PIR" id="AH1665">
    <property type="entry name" value="AH1665"/>
</dbReference>
<dbReference type="RefSeq" id="WP_003762825.1">
    <property type="nucleotide sequence ID" value="NC_003212.1"/>
</dbReference>
<dbReference type="SMR" id="Q92AQ4"/>
<dbReference type="STRING" id="272626.gene:17566221"/>
<dbReference type="GeneID" id="93235201"/>
<dbReference type="KEGG" id="lin:gatB"/>
<dbReference type="eggNOG" id="COG0064">
    <property type="taxonomic scope" value="Bacteria"/>
</dbReference>
<dbReference type="HOGENOM" id="CLU_019240_0_0_9"/>
<dbReference type="OrthoDB" id="9804078at2"/>
<dbReference type="Proteomes" id="UP000002513">
    <property type="component" value="Chromosome"/>
</dbReference>
<dbReference type="GO" id="GO:0050566">
    <property type="term" value="F:asparaginyl-tRNA synthase (glutamine-hydrolyzing) activity"/>
    <property type="evidence" value="ECO:0007669"/>
    <property type="project" value="RHEA"/>
</dbReference>
<dbReference type="GO" id="GO:0005524">
    <property type="term" value="F:ATP binding"/>
    <property type="evidence" value="ECO:0007669"/>
    <property type="project" value="UniProtKB-KW"/>
</dbReference>
<dbReference type="GO" id="GO:0050567">
    <property type="term" value="F:glutaminyl-tRNA synthase (glutamine-hydrolyzing) activity"/>
    <property type="evidence" value="ECO:0007669"/>
    <property type="project" value="UniProtKB-UniRule"/>
</dbReference>
<dbReference type="GO" id="GO:0070681">
    <property type="term" value="P:glutaminyl-tRNAGln biosynthesis via transamidation"/>
    <property type="evidence" value="ECO:0007669"/>
    <property type="project" value="TreeGrafter"/>
</dbReference>
<dbReference type="GO" id="GO:0006412">
    <property type="term" value="P:translation"/>
    <property type="evidence" value="ECO:0007669"/>
    <property type="project" value="UniProtKB-UniRule"/>
</dbReference>
<dbReference type="FunFam" id="1.10.10.410:FF:000001">
    <property type="entry name" value="Aspartyl/glutamyl-tRNA(Asn/Gln) amidotransferase subunit B"/>
    <property type="match status" value="1"/>
</dbReference>
<dbReference type="FunFam" id="1.10.150.380:FF:000001">
    <property type="entry name" value="Aspartyl/glutamyl-tRNA(Asn/Gln) amidotransferase subunit B"/>
    <property type="match status" value="1"/>
</dbReference>
<dbReference type="Gene3D" id="1.10.10.410">
    <property type="match status" value="1"/>
</dbReference>
<dbReference type="Gene3D" id="1.10.150.380">
    <property type="entry name" value="GatB domain, N-terminal subdomain"/>
    <property type="match status" value="1"/>
</dbReference>
<dbReference type="HAMAP" id="MF_00121">
    <property type="entry name" value="GatB"/>
    <property type="match status" value="1"/>
</dbReference>
<dbReference type="InterPro" id="IPR017959">
    <property type="entry name" value="Asn/Gln-tRNA_amidoTrfase_suB/E"/>
</dbReference>
<dbReference type="InterPro" id="IPR006075">
    <property type="entry name" value="Asn/Gln-tRNA_Trfase_suB/E_cat"/>
</dbReference>
<dbReference type="InterPro" id="IPR018027">
    <property type="entry name" value="Asn/Gln_amidotransferase"/>
</dbReference>
<dbReference type="InterPro" id="IPR003789">
    <property type="entry name" value="Asn/Gln_tRNA_amidoTrase-B-like"/>
</dbReference>
<dbReference type="InterPro" id="IPR004413">
    <property type="entry name" value="GatB"/>
</dbReference>
<dbReference type="InterPro" id="IPR042114">
    <property type="entry name" value="GatB_C_1"/>
</dbReference>
<dbReference type="InterPro" id="IPR023168">
    <property type="entry name" value="GatB_Yqey_C_2"/>
</dbReference>
<dbReference type="InterPro" id="IPR017958">
    <property type="entry name" value="Gln-tRNA_amidoTrfase_suB_CS"/>
</dbReference>
<dbReference type="InterPro" id="IPR014746">
    <property type="entry name" value="Gln_synth/guanido_kin_cat_dom"/>
</dbReference>
<dbReference type="NCBIfam" id="TIGR00133">
    <property type="entry name" value="gatB"/>
    <property type="match status" value="1"/>
</dbReference>
<dbReference type="NCBIfam" id="NF004011">
    <property type="entry name" value="PRK05477.1-1"/>
    <property type="match status" value="1"/>
</dbReference>
<dbReference type="NCBIfam" id="NF004012">
    <property type="entry name" value="PRK05477.1-2"/>
    <property type="match status" value="1"/>
</dbReference>
<dbReference type="NCBIfam" id="NF004014">
    <property type="entry name" value="PRK05477.1-4"/>
    <property type="match status" value="1"/>
</dbReference>
<dbReference type="PANTHER" id="PTHR11659">
    <property type="entry name" value="GLUTAMYL-TRNA GLN AMIDOTRANSFERASE SUBUNIT B MITOCHONDRIAL AND PROKARYOTIC PET112-RELATED"/>
    <property type="match status" value="1"/>
</dbReference>
<dbReference type="PANTHER" id="PTHR11659:SF0">
    <property type="entry name" value="GLUTAMYL-TRNA(GLN) AMIDOTRANSFERASE SUBUNIT B, MITOCHONDRIAL"/>
    <property type="match status" value="1"/>
</dbReference>
<dbReference type="Pfam" id="PF02934">
    <property type="entry name" value="GatB_N"/>
    <property type="match status" value="1"/>
</dbReference>
<dbReference type="Pfam" id="PF02637">
    <property type="entry name" value="GatB_Yqey"/>
    <property type="match status" value="1"/>
</dbReference>
<dbReference type="SMART" id="SM00845">
    <property type="entry name" value="GatB_Yqey"/>
    <property type="match status" value="1"/>
</dbReference>
<dbReference type="SUPFAM" id="SSF89095">
    <property type="entry name" value="GatB/YqeY motif"/>
    <property type="match status" value="1"/>
</dbReference>
<dbReference type="SUPFAM" id="SSF55931">
    <property type="entry name" value="Glutamine synthetase/guanido kinase"/>
    <property type="match status" value="1"/>
</dbReference>
<dbReference type="PROSITE" id="PS01234">
    <property type="entry name" value="GATB"/>
    <property type="match status" value="1"/>
</dbReference>